<accession>Q3MFL9</accession>
<dbReference type="EMBL" id="CP000117">
    <property type="protein sequence ID" value="ABA20217.1"/>
    <property type="molecule type" value="Genomic_DNA"/>
</dbReference>
<dbReference type="SMR" id="Q3MFL9"/>
<dbReference type="STRING" id="240292.Ava_0593"/>
<dbReference type="KEGG" id="ava:Ava_0593"/>
<dbReference type="eggNOG" id="ENOG5031GDS">
    <property type="taxonomic scope" value="Bacteria"/>
</dbReference>
<dbReference type="HOGENOM" id="CLU_137323_1_0_3"/>
<dbReference type="Proteomes" id="UP000002533">
    <property type="component" value="Chromosome"/>
</dbReference>
<dbReference type="GO" id="GO:0009654">
    <property type="term" value="C:photosystem II oxygen evolving complex"/>
    <property type="evidence" value="ECO:0007669"/>
    <property type="project" value="InterPro"/>
</dbReference>
<dbReference type="GO" id="GO:0031676">
    <property type="term" value="C:plasma membrane-derived thylakoid membrane"/>
    <property type="evidence" value="ECO:0007669"/>
    <property type="project" value="UniProtKB-SubCell"/>
</dbReference>
<dbReference type="GO" id="GO:0015979">
    <property type="term" value="P:photosynthesis"/>
    <property type="evidence" value="ECO:0007669"/>
    <property type="project" value="UniProtKB-UniRule"/>
</dbReference>
<dbReference type="Gene3D" id="2.40.30.220">
    <property type="entry name" value="Photosystem II Psb28"/>
    <property type="match status" value="1"/>
</dbReference>
<dbReference type="HAMAP" id="MF_01370">
    <property type="entry name" value="PSII_Psb28"/>
    <property type="match status" value="1"/>
</dbReference>
<dbReference type="InterPro" id="IPR038676">
    <property type="entry name" value="Psb28_c1_sf"/>
</dbReference>
<dbReference type="InterPro" id="IPR005610">
    <property type="entry name" value="PSII_Psb28_class-1"/>
</dbReference>
<dbReference type="NCBIfam" id="TIGR03047">
    <property type="entry name" value="PS_II_psb28"/>
    <property type="match status" value="1"/>
</dbReference>
<dbReference type="PANTHER" id="PTHR34963">
    <property type="match status" value="1"/>
</dbReference>
<dbReference type="PANTHER" id="PTHR34963:SF2">
    <property type="entry name" value="PHOTOSYSTEM II REACTION CENTER PSB28 PROTEIN, CHLOROPLASTIC"/>
    <property type="match status" value="1"/>
</dbReference>
<dbReference type="Pfam" id="PF03912">
    <property type="entry name" value="Psb28"/>
    <property type="match status" value="1"/>
</dbReference>
<organism>
    <name type="scientific">Trichormus variabilis (strain ATCC 29413 / PCC 7937)</name>
    <name type="common">Anabaena variabilis</name>
    <dbReference type="NCBI Taxonomy" id="240292"/>
    <lineage>
        <taxon>Bacteria</taxon>
        <taxon>Bacillati</taxon>
        <taxon>Cyanobacteriota</taxon>
        <taxon>Cyanophyceae</taxon>
        <taxon>Nostocales</taxon>
        <taxon>Nostocaceae</taxon>
        <taxon>Trichormus</taxon>
    </lineage>
</organism>
<comment type="subunit">
    <text evidence="1">Part of the photosystem II complex.</text>
</comment>
<comment type="subcellular location">
    <subcellularLocation>
        <location evidence="1">Cellular thylakoid membrane</location>
        <topology evidence="1">Peripheral membrane protein</topology>
        <orientation evidence="1">Cytoplasmic side</orientation>
    </subcellularLocation>
</comment>
<comment type="similarity">
    <text evidence="1">Belongs to the Psb28 family.</text>
</comment>
<proteinExistence type="inferred from homology"/>
<reference key="1">
    <citation type="journal article" date="2014" name="Stand. Genomic Sci.">
        <title>Complete genome sequence of Anabaena variabilis ATCC 29413.</title>
        <authorList>
            <person name="Thiel T."/>
            <person name="Pratte B.S."/>
            <person name="Zhong J."/>
            <person name="Goodwin L."/>
            <person name="Copeland A."/>
            <person name="Lucas S."/>
            <person name="Han C."/>
            <person name="Pitluck S."/>
            <person name="Land M.L."/>
            <person name="Kyrpides N.C."/>
            <person name="Woyke T."/>
        </authorList>
    </citation>
    <scope>NUCLEOTIDE SEQUENCE [LARGE SCALE GENOMIC DNA]</scope>
    <source>
        <strain>ATCC 29413 / PCC 7937</strain>
    </source>
</reference>
<sequence>MAKIQFSRGLDEEVIPEVRLTRSRTGDTGTATFIFTNPKILDQGTTEDITGMYLIDEEGEIITREVKGKFVNGRPEGVEAVYVMKSAQEWERFIRFMERYAQENDLGFSKS</sequence>
<gene>
    <name evidence="1" type="primary">psb28</name>
    <name type="ordered locus">Ava_0593</name>
</gene>
<evidence type="ECO:0000255" key="1">
    <source>
        <dbReference type="HAMAP-Rule" id="MF_01370"/>
    </source>
</evidence>
<feature type="chain" id="PRO_0000271560" description="Photosystem II reaction center Psb28 protein">
    <location>
        <begin position="1"/>
        <end position="111"/>
    </location>
</feature>
<name>PSB28_TRIV2</name>
<keyword id="KW-0472">Membrane</keyword>
<keyword id="KW-0602">Photosynthesis</keyword>
<keyword id="KW-0604">Photosystem II</keyword>
<keyword id="KW-0793">Thylakoid</keyword>
<protein>
    <recommendedName>
        <fullName evidence="1">Photosystem II reaction center Psb28 protein</fullName>
    </recommendedName>
    <alternativeName>
        <fullName evidence="1">Photosystem II 13 kDa protein</fullName>
    </alternativeName>
    <alternativeName>
        <fullName evidence="1">Photosystem II reaction center W protein</fullName>
    </alternativeName>
</protein>